<reference key="1">
    <citation type="journal article" date="2005" name="Infect. Immun.">
        <title>Whole-genome analyses of speciation events in pathogenic Brucellae.</title>
        <authorList>
            <person name="Chain P.S."/>
            <person name="Comerci D.J."/>
            <person name="Tolmasky M.E."/>
            <person name="Larimer F.W."/>
            <person name="Malfatti S.A."/>
            <person name="Vergez L.M."/>
            <person name="Aguero F."/>
            <person name="Land M.L."/>
            <person name="Ugalde R.A."/>
            <person name="Garcia E."/>
        </authorList>
    </citation>
    <scope>NUCLEOTIDE SEQUENCE [LARGE SCALE GENOMIC DNA]</scope>
    <source>
        <strain>2308</strain>
    </source>
</reference>
<organism>
    <name type="scientific">Brucella abortus (strain 2308)</name>
    <dbReference type="NCBI Taxonomy" id="359391"/>
    <lineage>
        <taxon>Bacteria</taxon>
        <taxon>Pseudomonadati</taxon>
        <taxon>Pseudomonadota</taxon>
        <taxon>Alphaproteobacteria</taxon>
        <taxon>Hyphomicrobiales</taxon>
        <taxon>Brucellaceae</taxon>
        <taxon>Brucella/Ochrobactrum group</taxon>
        <taxon>Brucella</taxon>
    </lineage>
</organism>
<name>SYP_BRUA2</name>
<keyword id="KW-0030">Aminoacyl-tRNA synthetase</keyword>
<keyword id="KW-0067">ATP-binding</keyword>
<keyword id="KW-0963">Cytoplasm</keyword>
<keyword id="KW-0436">Ligase</keyword>
<keyword id="KW-0547">Nucleotide-binding</keyword>
<keyword id="KW-0648">Protein biosynthesis</keyword>
<keyword id="KW-1185">Reference proteome</keyword>
<accession>Q2YNE3</accession>
<comment type="function">
    <text evidence="1">Catalyzes the attachment of proline to tRNA(Pro) in a two-step reaction: proline is first activated by ATP to form Pro-AMP and then transferred to the acceptor end of tRNA(Pro).</text>
</comment>
<comment type="catalytic activity">
    <reaction evidence="1">
        <text>tRNA(Pro) + L-proline + ATP = L-prolyl-tRNA(Pro) + AMP + diphosphate</text>
        <dbReference type="Rhea" id="RHEA:14305"/>
        <dbReference type="Rhea" id="RHEA-COMP:9700"/>
        <dbReference type="Rhea" id="RHEA-COMP:9702"/>
        <dbReference type="ChEBI" id="CHEBI:30616"/>
        <dbReference type="ChEBI" id="CHEBI:33019"/>
        <dbReference type="ChEBI" id="CHEBI:60039"/>
        <dbReference type="ChEBI" id="CHEBI:78442"/>
        <dbReference type="ChEBI" id="CHEBI:78532"/>
        <dbReference type="ChEBI" id="CHEBI:456215"/>
        <dbReference type="EC" id="6.1.1.15"/>
    </reaction>
</comment>
<comment type="subunit">
    <text evidence="1">Homodimer.</text>
</comment>
<comment type="subcellular location">
    <subcellularLocation>
        <location evidence="1">Cytoplasm</location>
    </subcellularLocation>
</comment>
<comment type="similarity">
    <text evidence="1">Belongs to the class-II aminoacyl-tRNA synthetase family. ProS type 2 subfamily.</text>
</comment>
<gene>
    <name evidence="1" type="primary">proS</name>
    <name type="ordered locus">BAB1_0842</name>
</gene>
<protein>
    <recommendedName>
        <fullName evidence="1">Proline--tRNA ligase</fullName>
        <ecNumber evidence="1">6.1.1.15</ecNumber>
    </recommendedName>
    <alternativeName>
        <fullName evidence="1">Prolyl-tRNA synthetase</fullName>
        <shortName evidence="1">ProRS</shortName>
    </alternativeName>
</protein>
<sequence>MRLSRYFLPILKENPKEAEIVSHRLMLRSGMIRQQSAGIYSWLPIGLKVLNKVCTIIREEQNRAGANEILMPTIQSADLWRESGRYDAYGKEMLRIQDRQKREMLFGPTNEEMVTDIFRSYVRSYKDLPLNLYHIQWKFRDEVRPRFGVMRSREFLMKDAYSFDLDYEGAKMAYYRMFVSYLRTFARVGLQAIPMRADTGPIGGDLSHEFIILAETGESQVYCDRAYLDLAVPGADTDFRNDAQLTDIVTRWTTPYAATDEMHDEADWAKVKPESQVSARGIEVGHIFHFGTKYSEPMGAKVQGPDGKEHLVSMGSYGIGPSRLVAAAIEASHDDAGIIWPKTIAPFGAGIVNMKPGDEGCDGVSEKLYEALTNAGVDPLLDDKDERPGAKFATMDLIGLPTQVIVGPRGVAAGEVEVKDRKTGERQSLGIKAAINMLTAQA</sequence>
<dbReference type="EC" id="6.1.1.15" evidence="1"/>
<dbReference type="EMBL" id="AM040264">
    <property type="protein sequence ID" value="CAJ10798.1"/>
    <property type="molecule type" value="Genomic_DNA"/>
</dbReference>
<dbReference type="RefSeq" id="WP_002968728.1">
    <property type="nucleotide sequence ID" value="NZ_KN046823.1"/>
</dbReference>
<dbReference type="SMR" id="Q2YNE3"/>
<dbReference type="STRING" id="359391.BAB1_0842"/>
<dbReference type="GeneID" id="93016793"/>
<dbReference type="KEGG" id="bmf:BAB1_0842"/>
<dbReference type="PATRIC" id="fig|359391.11.peg.3151"/>
<dbReference type="HOGENOM" id="CLU_016739_4_2_5"/>
<dbReference type="PhylomeDB" id="Q2YNE3"/>
<dbReference type="Proteomes" id="UP000002719">
    <property type="component" value="Chromosome I"/>
</dbReference>
<dbReference type="GO" id="GO:0005829">
    <property type="term" value="C:cytosol"/>
    <property type="evidence" value="ECO:0007669"/>
    <property type="project" value="TreeGrafter"/>
</dbReference>
<dbReference type="GO" id="GO:0005524">
    <property type="term" value="F:ATP binding"/>
    <property type="evidence" value="ECO:0007669"/>
    <property type="project" value="UniProtKB-UniRule"/>
</dbReference>
<dbReference type="GO" id="GO:0004827">
    <property type="term" value="F:proline-tRNA ligase activity"/>
    <property type="evidence" value="ECO:0007669"/>
    <property type="project" value="UniProtKB-UniRule"/>
</dbReference>
<dbReference type="GO" id="GO:0006433">
    <property type="term" value="P:prolyl-tRNA aminoacylation"/>
    <property type="evidence" value="ECO:0007669"/>
    <property type="project" value="UniProtKB-UniRule"/>
</dbReference>
<dbReference type="CDD" id="cd00861">
    <property type="entry name" value="ProRS_anticodon_short"/>
    <property type="match status" value="1"/>
</dbReference>
<dbReference type="CDD" id="cd00779">
    <property type="entry name" value="ProRS_core_prok"/>
    <property type="match status" value="1"/>
</dbReference>
<dbReference type="FunFam" id="3.30.930.10:FF:000042">
    <property type="entry name" value="probable proline--tRNA ligase, mitochondrial"/>
    <property type="match status" value="1"/>
</dbReference>
<dbReference type="FunFam" id="3.40.50.800:FF:000032">
    <property type="entry name" value="Proline--tRNA ligase"/>
    <property type="match status" value="1"/>
</dbReference>
<dbReference type="Gene3D" id="3.40.50.800">
    <property type="entry name" value="Anticodon-binding domain"/>
    <property type="match status" value="1"/>
</dbReference>
<dbReference type="Gene3D" id="3.30.930.10">
    <property type="entry name" value="Bira Bifunctional Protein, Domain 2"/>
    <property type="match status" value="1"/>
</dbReference>
<dbReference type="HAMAP" id="MF_01570">
    <property type="entry name" value="Pro_tRNA_synth_type2"/>
    <property type="match status" value="1"/>
</dbReference>
<dbReference type="InterPro" id="IPR002314">
    <property type="entry name" value="aa-tRNA-synt_IIb"/>
</dbReference>
<dbReference type="InterPro" id="IPR006195">
    <property type="entry name" value="aa-tRNA-synth_II"/>
</dbReference>
<dbReference type="InterPro" id="IPR045864">
    <property type="entry name" value="aa-tRNA-synth_II/BPL/LPL"/>
</dbReference>
<dbReference type="InterPro" id="IPR004154">
    <property type="entry name" value="Anticodon-bd"/>
</dbReference>
<dbReference type="InterPro" id="IPR036621">
    <property type="entry name" value="Anticodon-bd_dom_sf"/>
</dbReference>
<dbReference type="InterPro" id="IPR002316">
    <property type="entry name" value="Pro-tRNA-ligase_IIa"/>
</dbReference>
<dbReference type="InterPro" id="IPR004500">
    <property type="entry name" value="Pro-tRNA-synth_IIa_bac-type"/>
</dbReference>
<dbReference type="InterPro" id="IPR050062">
    <property type="entry name" value="Pro-tRNA_synthetase"/>
</dbReference>
<dbReference type="InterPro" id="IPR023716">
    <property type="entry name" value="Prolyl-tRNA_ligase_IIa_type2"/>
</dbReference>
<dbReference type="InterPro" id="IPR044140">
    <property type="entry name" value="ProRS_anticodon_short"/>
</dbReference>
<dbReference type="InterPro" id="IPR033730">
    <property type="entry name" value="ProRS_core_prok"/>
</dbReference>
<dbReference type="NCBIfam" id="NF008979">
    <property type="entry name" value="PRK12325.1"/>
    <property type="match status" value="1"/>
</dbReference>
<dbReference type="NCBIfam" id="TIGR00409">
    <property type="entry name" value="proS_fam_II"/>
    <property type="match status" value="1"/>
</dbReference>
<dbReference type="PANTHER" id="PTHR42753">
    <property type="entry name" value="MITOCHONDRIAL RIBOSOME PROTEIN L39/PROLYL-TRNA LIGASE FAMILY MEMBER"/>
    <property type="match status" value="1"/>
</dbReference>
<dbReference type="PANTHER" id="PTHR42753:SF2">
    <property type="entry name" value="PROLINE--TRNA LIGASE"/>
    <property type="match status" value="1"/>
</dbReference>
<dbReference type="Pfam" id="PF03129">
    <property type="entry name" value="HGTP_anticodon"/>
    <property type="match status" value="1"/>
</dbReference>
<dbReference type="Pfam" id="PF00587">
    <property type="entry name" value="tRNA-synt_2b"/>
    <property type="match status" value="1"/>
</dbReference>
<dbReference type="PRINTS" id="PR01046">
    <property type="entry name" value="TRNASYNTHPRO"/>
</dbReference>
<dbReference type="SUPFAM" id="SSF52954">
    <property type="entry name" value="Class II aaRS ABD-related"/>
    <property type="match status" value="1"/>
</dbReference>
<dbReference type="SUPFAM" id="SSF55681">
    <property type="entry name" value="Class II aaRS and biotin synthetases"/>
    <property type="match status" value="1"/>
</dbReference>
<dbReference type="PROSITE" id="PS50862">
    <property type="entry name" value="AA_TRNA_LIGASE_II"/>
    <property type="match status" value="1"/>
</dbReference>
<proteinExistence type="inferred from homology"/>
<evidence type="ECO:0000255" key="1">
    <source>
        <dbReference type="HAMAP-Rule" id="MF_01570"/>
    </source>
</evidence>
<feature type="chain" id="PRO_0000248892" description="Proline--tRNA ligase">
    <location>
        <begin position="1"/>
        <end position="442"/>
    </location>
</feature>